<accession>Q7U564</accession>
<keyword id="KW-0997">Cell inner membrane</keyword>
<keyword id="KW-1003">Cell membrane</keyword>
<keyword id="KW-0472">Membrane</keyword>
<keyword id="KW-0808">Transferase</keyword>
<keyword id="KW-0812">Transmembrane</keyword>
<keyword id="KW-1133">Transmembrane helix</keyword>
<protein>
    <recommendedName>
        <fullName evidence="1">Phosphatidylglycerol--prolipoprotein diacylglyceryl transferase</fullName>
        <ecNumber evidence="1">2.5.1.145</ecNumber>
    </recommendedName>
</protein>
<organism>
    <name type="scientific">Parasynechococcus marenigrum (strain WH8102)</name>
    <dbReference type="NCBI Taxonomy" id="84588"/>
    <lineage>
        <taxon>Bacteria</taxon>
        <taxon>Bacillati</taxon>
        <taxon>Cyanobacteriota</taxon>
        <taxon>Cyanophyceae</taxon>
        <taxon>Synechococcales</taxon>
        <taxon>Prochlorococcaceae</taxon>
        <taxon>Parasynechococcus</taxon>
        <taxon>Parasynechococcus marenigrum</taxon>
    </lineage>
</organism>
<proteinExistence type="inferred from homology"/>
<gene>
    <name evidence="1" type="primary">lgt</name>
    <name type="ordered locus">SYNW1843</name>
</gene>
<name>LGT_PARMW</name>
<evidence type="ECO:0000255" key="1">
    <source>
        <dbReference type="HAMAP-Rule" id="MF_01147"/>
    </source>
</evidence>
<comment type="function">
    <text evidence="1">Catalyzes the transfer of the diacylglyceryl group from phosphatidylglycerol to the sulfhydryl group of the N-terminal cysteine of a prolipoprotein, the first step in the formation of mature lipoproteins.</text>
</comment>
<comment type="catalytic activity">
    <reaction evidence="1">
        <text>L-cysteinyl-[prolipoprotein] + a 1,2-diacyl-sn-glycero-3-phospho-(1'-sn-glycerol) = an S-1,2-diacyl-sn-glyceryl-L-cysteinyl-[prolipoprotein] + sn-glycerol 1-phosphate + H(+)</text>
        <dbReference type="Rhea" id="RHEA:56712"/>
        <dbReference type="Rhea" id="RHEA-COMP:14679"/>
        <dbReference type="Rhea" id="RHEA-COMP:14680"/>
        <dbReference type="ChEBI" id="CHEBI:15378"/>
        <dbReference type="ChEBI" id="CHEBI:29950"/>
        <dbReference type="ChEBI" id="CHEBI:57685"/>
        <dbReference type="ChEBI" id="CHEBI:64716"/>
        <dbReference type="ChEBI" id="CHEBI:140658"/>
        <dbReference type="EC" id="2.5.1.145"/>
    </reaction>
</comment>
<comment type="pathway">
    <text evidence="1">Protein modification; lipoprotein biosynthesis (diacylglyceryl transfer).</text>
</comment>
<comment type="subcellular location">
    <subcellularLocation>
        <location evidence="1">Cell inner membrane</location>
        <topology evidence="1">Multi-pass membrane protein</topology>
    </subcellularLocation>
</comment>
<comment type="similarity">
    <text evidence="1">Belongs to the Lgt family.</text>
</comment>
<feature type="chain" id="PRO_0000172699" description="Phosphatidylglycerol--prolipoprotein diacylglyceryl transferase">
    <location>
        <begin position="1"/>
        <end position="278"/>
    </location>
</feature>
<feature type="transmembrane region" description="Helical" evidence="1">
    <location>
        <begin position="12"/>
        <end position="32"/>
    </location>
</feature>
<feature type="transmembrane region" description="Helical" evidence="1">
    <location>
        <begin position="44"/>
        <end position="64"/>
    </location>
</feature>
<feature type="transmembrane region" description="Helical" evidence="1">
    <location>
        <begin position="86"/>
        <end position="106"/>
    </location>
</feature>
<feature type="transmembrane region" description="Helical" evidence="1">
    <location>
        <begin position="113"/>
        <end position="133"/>
    </location>
</feature>
<feature type="transmembrane region" description="Helical" evidence="1">
    <location>
        <begin position="173"/>
        <end position="193"/>
    </location>
</feature>
<feature type="transmembrane region" description="Helical" evidence="1">
    <location>
        <begin position="203"/>
        <end position="223"/>
    </location>
</feature>
<feature type="transmembrane region" description="Helical" evidence="1">
    <location>
        <begin position="246"/>
        <end position="266"/>
    </location>
</feature>
<feature type="binding site" evidence="1">
    <location>
        <position position="134"/>
    </location>
    <ligand>
        <name>a 1,2-diacyl-sn-glycero-3-phospho-(1'-sn-glycerol)</name>
        <dbReference type="ChEBI" id="CHEBI:64716"/>
    </ligand>
</feature>
<reference key="1">
    <citation type="journal article" date="2003" name="Nature">
        <title>The genome of a motile marine Synechococcus.</title>
        <authorList>
            <person name="Palenik B."/>
            <person name="Brahamsha B."/>
            <person name="Larimer F.W."/>
            <person name="Land M.L."/>
            <person name="Hauser L."/>
            <person name="Chain P."/>
            <person name="Lamerdin J.E."/>
            <person name="Regala W."/>
            <person name="Allen E.E."/>
            <person name="McCarren J."/>
            <person name="Paulsen I.T."/>
            <person name="Dufresne A."/>
            <person name="Partensky F."/>
            <person name="Webb E.A."/>
            <person name="Waterbury J."/>
        </authorList>
    </citation>
    <scope>NUCLEOTIDE SEQUENCE [LARGE SCALE GENOMIC DNA]</scope>
    <source>
        <strain>WH8102</strain>
    </source>
</reference>
<sequence>MFTSPGPVLFQFGPLTLRWYGLLIAMAVLIGLNLSSRLAQSRKLENGLISDLLPLLVLFSVIGARLYYVAFEWHNYANQPIKALAIWEGGIAIHGALIAGTLTLILFCRWRSQPFLDVLDVLAPSVALGQAIGRWGNFFNSEAFGVPTDLAWKLFIPYANRPVIYADAEFFHPTFLYESIWNLLLFVLLLVLFRWGSRERQNFPAGTLSCVYLIGYSLGRIWIEGLRIDPLCVGALPPACEGGVRIAQLMSAMLMVLGGLGLWWLKRRQQQLPVSTNR</sequence>
<dbReference type="EC" id="2.5.1.145" evidence="1"/>
<dbReference type="EMBL" id="BX569694">
    <property type="protein sequence ID" value="CAE08358.1"/>
    <property type="molecule type" value="Genomic_DNA"/>
</dbReference>
<dbReference type="RefSeq" id="WP_011128701.1">
    <property type="nucleotide sequence ID" value="NC_005070.1"/>
</dbReference>
<dbReference type="SMR" id="Q7U564"/>
<dbReference type="STRING" id="84588.SYNW1843"/>
<dbReference type="KEGG" id="syw:SYNW1843"/>
<dbReference type="eggNOG" id="COG0682">
    <property type="taxonomic scope" value="Bacteria"/>
</dbReference>
<dbReference type="HOGENOM" id="CLU_013386_1_2_3"/>
<dbReference type="UniPathway" id="UPA00664"/>
<dbReference type="Proteomes" id="UP000001422">
    <property type="component" value="Chromosome"/>
</dbReference>
<dbReference type="GO" id="GO:0005886">
    <property type="term" value="C:plasma membrane"/>
    <property type="evidence" value="ECO:0007669"/>
    <property type="project" value="UniProtKB-SubCell"/>
</dbReference>
<dbReference type="GO" id="GO:0008961">
    <property type="term" value="F:phosphatidylglycerol-prolipoprotein diacylglyceryl transferase activity"/>
    <property type="evidence" value="ECO:0007669"/>
    <property type="project" value="UniProtKB-UniRule"/>
</dbReference>
<dbReference type="GO" id="GO:0042158">
    <property type="term" value="P:lipoprotein biosynthetic process"/>
    <property type="evidence" value="ECO:0007669"/>
    <property type="project" value="UniProtKB-UniRule"/>
</dbReference>
<dbReference type="HAMAP" id="MF_01147">
    <property type="entry name" value="Lgt"/>
    <property type="match status" value="1"/>
</dbReference>
<dbReference type="InterPro" id="IPR001640">
    <property type="entry name" value="Lgt"/>
</dbReference>
<dbReference type="NCBIfam" id="TIGR00544">
    <property type="entry name" value="lgt"/>
    <property type="match status" value="1"/>
</dbReference>
<dbReference type="PANTHER" id="PTHR30589:SF0">
    <property type="entry name" value="PHOSPHATIDYLGLYCEROL--PROLIPOPROTEIN DIACYLGLYCERYL TRANSFERASE"/>
    <property type="match status" value="1"/>
</dbReference>
<dbReference type="PANTHER" id="PTHR30589">
    <property type="entry name" value="PROLIPOPROTEIN DIACYLGLYCERYL TRANSFERASE"/>
    <property type="match status" value="1"/>
</dbReference>
<dbReference type="Pfam" id="PF01790">
    <property type="entry name" value="LGT"/>
    <property type="match status" value="1"/>
</dbReference>
<dbReference type="PROSITE" id="PS01311">
    <property type="entry name" value="LGT"/>
    <property type="match status" value="1"/>
</dbReference>